<dbReference type="EC" id="4.2.3.6"/>
<dbReference type="EMBL" id="M64348">
    <property type="protein sequence ID" value="AAB02038.1"/>
    <property type="molecule type" value="Genomic_DNA"/>
</dbReference>
<dbReference type="SMR" id="P27679"/>
<dbReference type="UniPathway" id="UPA00267"/>
<dbReference type="GO" id="GO:0045482">
    <property type="term" value="F:trichodiene synthase activity"/>
    <property type="evidence" value="ECO:0007669"/>
    <property type="project" value="UniProtKB-EC"/>
</dbReference>
<dbReference type="GO" id="GO:0016106">
    <property type="term" value="P:sesquiterpenoid biosynthetic process"/>
    <property type="evidence" value="ECO:0007669"/>
    <property type="project" value="InterPro"/>
</dbReference>
<dbReference type="Gene3D" id="1.10.600.10">
    <property type="entry name" value="Farnesyl Diphosphate Synthase"/>
    <property type="match status" value="1"/>
</dbReference>
<dbReference type="InterPro" id="IPR008949">
    <property type="entry name" value="Isoprenoid_synthase_dom_sf"/>
</dbReference>
<dbReference type="InterPro" id="IPR010458">
    <property type="entry name" value="TRI5_ascomyc"/>
</dbReference>
<dbReference type="InterPro" id="IPR024652">
    <property type="entry name" value="Trichodiene_synth"/>
</dbReference>
<dbReference type="Pfam" id="PF06330">
    <property type="entry name" value="TRI5"/>
    <property type="match status" value="1"/>
</dbReference>
<dbReference type="PIRSF" id="PIRSF001388">
    <property type="entry name" value="TRI5"/>
    <property type="match status" value="1"/>
</dbReference>
<dbReference type="SFLD" id="SFLDS00005">
    <property type="entry name" value="Isoprenoid_Synthase_Type_I"/>
    <property type="match status" value="1"/>
</dbReference>
<dbReference type="SFLD" id="SFLDG01021">
    <property type="entry name" value="Trichodiene_Synthase_Like"/>
    <property type="match status" value="1"/>
</dbReference>
<dbReference type="SUPFAM" id="SSF48576">
    <property type="entry name" value="Terpenoid synthases"/>
    <property type="match status" value="1"/>
</dbReference>
<protein>
    <recommendedName>
        <fullName>Trichodiene synthase</fullName>
        <ecNumber>4.2.3.6</ecNumber>
    </recommendedName>
    <alternativeName>
        <fullName>Sesquiterpene cyclase</fullName>
        <shortName>TS</shortName>
    </alternativeName>
</protein>
<keyword id="KW-0456">Lyase</keyword>
<feature type="chain" id="PRO_0000221585" description="Trichodiene synthase">
    <location>
        <begin position="1"/>
        <end position="383"/>
    </location>
</feature>
<name>TRI5_GIBPU</name>
<accession>P27679</accession>
<proteinExistence type="inferred from homology"/>
<evidence type="ECO:0000305" key="1"/>
<reference key="1">
    <citation type="journal article" date="1992" name="Mol. Plant Microbe Interact.">
        <title>Isolation and gene disruption of the Tox5 gene encoding trichodiene synthase in Gibberella pulicaris.</title>
        <authorList>
            <person name="Hohn T.M."/>
            <person name="Desjardins A.E."/>
        </authorList>
    </citation>
    <scope>NUCLEOTIDE SEQUENCE [GENOMIC DNA]</scope>
</reference>
<comment type="function">
    <text>TS is a member of the terpene cyclase group of enzymes. It catalyzes the isomerization and cyclization of farnesyl pyro-phosphate to form trichodiene, the first cyclic intermediate in the biosynthetic pathway for trichothecenes. It serves to branch trichothecene biosynthesis from the isoprenoid pathway.</text>
</comment>
<comment type="catalytic activity">
    <reaction>
        <text>(2E,6E)-farnesyl diphosphate = trichodiene + diphosphate</text>
        <dbReference type="Rhea" id="RHEA:12052"/>
        <dbReference type="ChEBI" id="CHEBI:15861"/>
        <dbReference type="ChEBI" id="CHEBI:33019"/>
        <dbReference type="ChEBI" id="CHEBI:175763"/>
        <dbReference type="EC" id="4.2.3.6"/>
    </reaction>
</comment>
<comment type="pathway">
    <text>Sesquiterpene biosynthesis; trichothecene biosynthesis.</text>
</comment>
<comment type="miscellaneous">
    <text>Trichothecenes are sesquiterpenoid toxins that act by inhibiting protein biosynthesis.</text>
</comment>
<comment type="similarity">
    <text evidence="1">Belongs to the trichodiene synthase family.</text>
</comment>
<organism>
    <name type="scientific">Gibberella pulicaris</name>
    <dbReference type="NCBI Taxonomy" id="5128"/>
    <lineage>
        <taxon>Eukaryota</taxon>
        <taxon>Fungi</taxon>
        <taxon>Dikarya</taxon>
        <taxon>Ascomycota</taxon>
        <taxon>Pezizomycotina</taxon>
        <taxon>Sordariomycetes</taxon>
        <taxon>Hypocreomycetidae</taxon>
        <taxon>Hypocreales</taxon>
        <taxon>Nectriaceae</taxon>
        <taxon>Fusarium</taxon>
    </lineage>
</organism>
<sequence>MENFPTEYFLNTSVRLLEYIRYRDSNYTREERIENLHYAYNKAAHHFAQPRQQQLLKVDPKRLQASLQTIVGMVVYSWAKVSKECMADLSIHYTYTLVLDDSSDDPYPAMMNYFNDLQAGREQAHPWWALVNEHFPNVLRHFGPFCSLNLIRSTLDFFEGCWIEQYNFGGFPGSHDYPQFLRRMNGLGHCVGASLWPKEQFDERGLFLEITSAIAQMENWMVWVNDLMSFYKEFDDERDQISLVKNYVVSDEITLHEALEKLTQDTLHSSKQMVAVFSEKDPQVMDTIECFMHGYVTWHLCDHRYRLNEIYEKVKGQKTEDAEKFCKFYEQAANVGAVSPSEWAYPPIAQLANIRTKDVKDLKDVKDLKEIQKPLLSSIELVE</sequence>
<gene>
    <name type="primary">TRI5</name>
    <name type="synonym">TOX5</name>
</gene>